<proteinExistence type="inferred from homology"/>
<organism>
    <name type="scientific">Monkeypox virus</name>
    <dbReference type="NCBI Taxonomy" id="10244"/>
    <lineage>
        <taxon>Viruses</taxon>
        <taxon>Varidnaviria</taxon>
        <taxon>Bamfordvirae</taxon>
        <taxon>Nucleocytoviricota</taxon>
        <taxon>Pokkesviricetes</taxon>
        <taxon>Chitovirales</taxon>
        <taxon>Poxviridae</taxon>
        <taxon>Chordopoxvirinae</taxon>
        <taxon>Orthopoxvirus</taxon>
    </lineage>
</organism>
<dbReference type="EC" id="1.8.3.2" evidence="1 4"/>
<dbReference type="EMBL" id="MT903340">
    <property type="protein sequence ID" value="QNP12928.1"/>
    <property type="molecule type" value="Genomic_DNA"/>
</dbReference>
<dbReference type="RefSeq" id="YP_010377055.1">
    <property type="nucleotide sequence ID" value="NC_063383.1"/>
</dbReference>
<dbReference type="SMR" id="A0A7H0DN45"/>
<dbReference type="GeneID" id="72551467"/>
<dbReference type="Proteomes" id="UP000516359">
    <property type="component" value="Genome"/>
</dbReference>
<dbReference type="GO" id="GO:0030430">
    <property type="term" value="C:host cell cytoplasm"/>
    <property type="evidence" value="ECO:0007669"/>
    <property type="project" value="UniProtKB-SubCell"/>
</dbReference>
<dbReference type="GO" id="GO:0016020">
    <property type="term" value="C:membrane"/>
    <property type="evidence" value="ECO:0007669"/>
    <property type="project" value="UniProtKB-KW"/>
</dbReference>
<dbReference type="GO" id="GO:0019031">
    <property type="term" value="C:viral envelope"/>
    <property type="evidence" value="ECO:0007669"/>
    <property type="project" value="UniProtKB-KW"/>
</dbReference>
<dbReference type="GO" id="GO:0055036">
    <property type="term" value="C:virion membrane"/>
    <property type="evidence" value="ECO:0007669"/>
    <property type="project" value="UniProtKB-SubCell"/>
</dbReference>
<dbReference type="GO" id="GO:0016972">
    <property type="term" value="F:thiol oxidase activity"/>
    <property type="evidence" value="ECO:0007669"/>
    <property type="project" value="InterPro"/>
</dbReference>
<dbReference type="Gene3D" id="1.20.120.310">
    <property type="entry name" value="ERV/ALR sulfhydryl oxidase domain"/>
    <property type="match status" value="1"/>
</dbReference>
<dbReference type="InterPro" id="IPR036774">
    <property type="entry name" value="ERV/ALR_sulphydryl_oxid_sf"/>
</dbReference>
<dbReference type="InterPro" id="IPR017905">
    <property type="entry name" value="ERV/ALR_sulphydryl_oxidase"/>
</dbReference>
<dbReference type="InterPro" id="IPR006890">
    <property type="entry name" value="Sulphydryl_Oase_FAD-link_ERV1"/>
</dbReference>
<dbReference type="Pfam" id="PF04805">
    <property type="entry name" value="Pox_E10"/>
    <property type="match status" value="1"/>
</dbReference>
<dbReference type="PIRSF" id="PIRSF015696">
    <property type="entry name" value="VAC_E10R"/>
    <property type="match status" value="1"/>
</dbReference>
<dbReference type="SUPFAM" id="SSF69000">
    <property type="entry name" value="FAD-dependent thiol oxidase"/>
    <property type="match status" value="1"/>
</dbReference>
<dbReference type="PROSITE" id="PS51324">
    <property type="entry name" value="ERV_ALR"/>
    <property type="match status" value="1"/>
</dbReference>
<accession>A0A7H0DN45</accession>
<keyword id="KW-1015">Disulfide bond</keyword>
<keyword id="KW-0274">FAD</keyword>
<keyword id="KW-0285">Flavoprotein</keyword>
<keyword id="KW-1035">Host cytoplasm</keyword>
<keyword id="KW-0426">Late protein</keyword>
<keyword id="KW-0472">Membrane</keyword>
<keyword id="KW-0560">Oxidoreductase</keyword>
<keyword id="KW-0676">Redox-active center</keyword>
<keyword id="KW-1185">Reference proteome</keyword>
<keyword id="KW-0812">Transmembrane</keyword>
<keyword id="KW-1133">Transmembrane helix</keyword>
<keyword id="KW-0261">Viral envelope protein</keyword>
<keyword id="KW-0946">Virion</keyword>
<feature type="chain" id="PRO_0000457695" description="Probable FAD-linked sulfhydryl oxidase OPG072">
    <location>
        <begin position="1"/>
        <end position="95"/>
    </location>
</feature>
<feature type="topological domain" description="Intravirion" evidence="2">
    <location>
        <begin position="1"/>
        <end position="8"/>
    </location>
</feature>
<feature type="transmembrane region" description="Helical" evidence="2">
    <location>
        <begin position="9"/>
        <end position="25"/>
    </location>
</feature>
<feature type="topological domain" description="Virion surface" evidence="2">
    <location>
        <begin position="26"/>
        <end position="95"/>
    </location>
</feature>
<feature type="domain" description="ERV/ALR sulfhydryl oxidase" evidence="3">
    <location>
        <begin position="1"/>
        <end position="95"/>
    </location>
</feature>
<feature type="disulfide bond" description="Redox-active" evidence="3">
    <location>
        <begin position="43"/>
        <end position="46"/>
    </location>
</feature>
<comment type="function">
    <text evidence="1">FAD-dependent sulfhydryl oxidase that catalyzes disulfide bond formation. The complete pathway for formation of disulfide bonds in intracellular virion membrane proteins sequentially involves thiol-disulfide transfer between OPG072, OPG128 and OPG088.</text>
</comment>
<comment type="catalytic activity">
    <reaction evidence="1">
        <text>2 R'C(R)SH + O2 = R'C(R)S-S(R)CR' + H2O2</text>
        <dbReference type="Rhea" id="RHEA:17357"/>
        <dbReference type="ChEBI" id="CHEBI:15379"/>
        <dbReference type="ChEBI" id="CHEBI:16240"/>
        <dbReference type="ChEBI" id="CHEBI:16520"/>
        <dbReference type="ChEBI" id="CHEBI:17412"/>
        <dbReference type="EC" id="1.8.3.2"/>
    </reaction>
</comment>
<comment type="cofactor">
    <cofactor evidence="4">
        <name>FAD</name>
        <dbReference type="ChEBI" id="CHEBI:57692"/>
    </cofactor>
</comment>
<comment type="subunit">
    <text evidence="1">Interacts with OPG128; this interaction involves formation of a transient disulfide-bonded intermediate, allowing disulfide bond transfer.</text>
</comment>
<comment type="subcellular location">
    <subcellularLocation>
        <location evidence="1">Virion membrane</location>
    </subcellularLocation>
    <subcellularLocation>
        <location evidence="1">Host cytoplasm</location>
    </subcellularLocation>
    <text evidence="1">Associated with crescent membranes, immature virions (IV) and mature virions (MV).</text>
</comment>
<comment type="induction">
    <text evidence="1">Expressed in the early phase of the viral replicative cycle.</text>
</comment>
<comment type="similarity">
    <text evidence="5">Belongs to the orthopoxvirus OPG072 family.</text>
</comment>
<gene>
    <name type="primary">OPG072</name>
    <name type="ORF">MPXVgp058</name>
</gene>
<sequence length="95" mass="10911">MNPKHWGRAVWTIIFIVLSQAGLDGNIEACKRKLYTIVSTLPCPACRRHATIAIEDNNVMSSDDLNYIYYFFIRLFNNLAFDPKYAIDVSKVKPL</sequence>
<evidence type="ECO:0000250" key="1">
    <source>
        <dbReference type="UniProtKB" id="P23373"/>
    </source>
</evidence>
<evidence type="ECO:0000255" key="2"/>
<evidence type="ECO:0000255" key="3">
    <source>
        <dbReference type="PROSITE-ProRule" id="PRU00654"/>
    </source>
</evidence>
<evidence type="ECO:0000255" key="4">
    <source>
        <dbReference type="RuleBase" id="RU371123"/>
    </source>
</evidence>
<evidence type="ECO:0000305" key="5"/>
<organismHost>
    <name type="scientific">Cynomys gunnisoni</name>
    <name type="common">Gunnison's prairie dog</name>
    <name type="synonym">Spermophilus gunnisoni</name>
    <dbReference type="NCBI Taxonomy" id="45479"/>
</organismHost>
<organismHost>
    <name type="scientific">Cynomys leucurus</name>
    <name type="common">White-tailed prairie dog</name>
    <dbReference type="NCBI Taxonomy" id="99825"/>
</organismHost>
<organismHost>
    <name type="scientific">Cynomys ludovicianus</name>
    <name type="common">Black-tailed prairie dog</name>
    <dbReference type="NCBI Taxonomy" id="45480"/>
</organismHost>
<organismHost>
    <name type="scientific">Cynomys mexicanus</name>
    <name type="common">Mexican prairie dog</name>
    <dbReference type="NCBI Taxonomy" id="99826"/>
</organismHost>
<organismHost>
    <name type="scientific">Cynomys parvidens</name>
    <name type="common">Utah prairie dog</name>
    <dbReference type="NCBI Taxonomy" id="99827"/>
</organismHost>
<organismHost>
    <name type="scientific">Gliridae</name>
    <name type="common">dormice</name>
    <dbReference type="NCBI Taxonomy" id="30650"/>
</organismHost>
<organismHost>
    <name type="scientific">Heliosciurus ruwenzorii</name>
    <name type="common">Ruwenzori sun squirrel</name>
    <dbReference type="NCBI Taxonomy" id="226685"/>
</organismHost>
<organismHost>
    <name type="scientific">Homo sapiens</name>
    <name type="common">Human</name>
    <dbReference type="NCBI Taxonomy" id="9606"/>
</organismHost>
<organismHost>
    <name type="scientific">Mus musculus</name>
    <name type="common">Mouse</name>
    <dbReference type="NCBI Taxonomy" id="10090"/>
</organismHost>
<reference key="1">
    <citation type="journal article" date="2022" name="J. Infect. Dis.">
        <title>Exportation of Monkeypox virus from the African continent.</title>
        <authorList>
            <person name="Mauldin M.R."/>
            <person name="McCollum A.M."/>
            <person name="Nakazawa Y.J."/>
            <person name="Mandra A."/>
            <person name="Whitehouse E.R."/>
            <person name="Davidson W."/>
            <person name="Zhao H."/>
            <person name="Gao J."/>
            <person name="Li Y."/>
            <person name="Doty J."/>
            <person name="Yinka-Ogunleye A."/>
            <person name="Akinpelu A."/>
            <person name="Aruna O."/>
            <person name="Naidoo D."/>
            <person name="Lewandowski K."/>
            <person name="Afrough B."/>
            <person name="Graham V."/>
            <person name="Aarons E."/>
            <person name="Hewson R."/>
            <person name="Vipond R."/>
            <person name="Dunning J."/>
            <person name="Chand M."/>
            <person name="Brown C."/>
            <person name="Cohen-Gihon I."/>
            <person name="Erez N."/>
            <person name="Shifman O."/>
            <person name="Israeli O."/>
            <person name="Sharon M."/>
            <person name="Schwartz E."/>
            <person name="Beth-Din A."/>
            <person name="Zvi A."/>
            <person name="Mak T.M."/>
            <person name="Ng Y.K."/>
            <person name="Cui L."/>
            <person name="Lin R.T.P."/>
            <person name="Olson V.A."/>
            <person name="Brooks T."/>
            <person name="Paran N."/>
            <person name="Ihekweazu C."/>
            <person name="Reynolds M.G."/>
        </authorList>
    </citation>
    <scope>NUCLEOTIDE SEQUENCE [LARGE SCALE GENOMIC DNA]</scope>
    <source>
        <strain>MPXV-M5312_HM12_Rivers</strain>
    </source>
</reference>
<name>PG072_MONPV</name>
<protein>
    <recommendedName>
        <fullName>Probable FAD-linked sulfhydryl oxidase OPG072</fullName>
        <ecNumber evidence="1">1.8.3.2</ecNumber>
    </recommendedName>
    <alternativeName>
        <fullName evidence="4">Sulfhydryl oxidase</fullName>
        <ecNumber evidence="4">1.8.3.2</ecNumber>
    </alternativeName>
</protein>